<feature type="chain" id="PRO_1000082377" description="Co-chaperonin GroES">
    <location>
        <begin position="1"/>
        <end position="96"/>
    </location>
</feature>
<comment type="function">
    <text evidence="1">Together with the chaperonin GroEL, plays an essential role in assisting protein folding. The GroEL-GroES system forms a nano-cage that allows encapsulation of the non-native substrate proteins and provides a physical environment optimized to promote and accelerate protein folding. GroES binds to the apical surface of the GroEL ring, thereby capping the opening of the GroEL channel.</text>
</comment>
<comment type="subunit">
    <text evidence="1">Heptamer of 7 subunits arranged in a ring. Interacts with the chaperonin GroEL.</text>
</comment>
<comment type="subcellular location">
    <subcellularLocation>
        <location evidence="1">Cytoplasm</location>
    </subcellularLocation>
</comment>
<comment type="similarity">
    <text evidence="1">Belongs to the GroES chaperonin family.</text>
</comment>
<organism>
    <name type="scientific">Geotalea uraniireducens (strain Rf4)</name>
    <name type="common">Geobacter uraniireducens</name>
    <dbReference type="NCBI Taxonomy" id="351605"/>
    <lineage>
        <taxon>Bacteria</taxon>
        <taxon>Pseudomonadati</taxon>
        <taxon>Thermodesulfobacteriota</taxon>
        <taxon>Desulfuromonadia</taxon>
        <taxon>Geobacterales</taxon>
        <taxon>Geobacteraceae</taxon>
        <taxon>Geotalea</taxon>
    </lineage>
</organism>
<protein>
    <recommendedName>
        <fullName evidence="1">Co-chaperonin GroES</fullName>
    </recommendedName>
    <alternativeName>
        <fullName evidence="1">10 kDa chaperonin</fullName>
    </alternativeName>
    <alternativeName>
        <fullName evidence="1">Chaperonin-10</fullName>
        <shortName evidence="1">Cpn10</shortName>
    </alternativeName>
</protein>
<accession>A5G9I1</accession>
<keyword id="KW-0143">Chaperone</keyword>
<keyword id="KW-0963">Cytoplasm</keyword>
<keyword id="KW-1185">Reference proteome</keyword>
<gene>
    <name evidence="1" type="primary">groES</name>
    <name evidence="1" type="synonym">groS</name>
    <name type="ordered locus">Gura_4306</name>
</gene>
<sequence length="96" mass="10688">MKLRPMQDRIIVKRVEEETKTAGGIFIPETAKEKPMEGEVVAVGNGKRTEDGKVLPLDVKVGDKVLFGKYSGTEIKVEGQDFLIMREDDILGVIEK</sequence>
<reference key="1">
    <citation type="submission" date="2007-05" db="EMBL/GenBank/DDBJ databases">
        <title>Complete sequence of Geobacter uraniireducens Rf4.</title>
        <authorList>
            <consortium name="US DOE Joint Genome Institute"/>
            <person name="Copeland A."/>
            <person name="Lucas S."/>
            <person name="Lapidus A."/>
            <person name="Barry K."/>
            <person name="Detter J.C."/>
            <person name="Glavina del Rio T."/>
            <person name="Hammon N."/>
            <person name="Israni S."/>
            <person name="Dalin E."/>
            <person name="Tice H."/>
            <person name="Pitluck S."/>
            <person name="Chertkov O."/>
            <person name="Brettin T."/>
            <person name="Bruce D."/>
            <person name="Han C."/>
            <person name="Schmutz J."/>
            <person name="Larimer F."/>
            <person name="Land M."/>
            <person name="Hauser L."/>
            <person name="Kyrpides N."/>
            <person name="Mikhailova N."/>
            <person name="Shelobolina E."/>
            <person name="Aklujkar M."/>
            <person name="Lovley D."/>
            <person name="Richardson P."/>
        </authorList>
    </citation>
    <scope>NUCLEOTIDE SEQUENCE [LARGE SCALE GENOMIC DNA]</scope>
    <source>
        <strain>ATCC BAA-1134 / JCM 13001 / Rf4</strain>
    </source>
</reference>
<name>CH10_GEOUR</name>
<dbReference type="EMBL" id="CP000698">
    <property type="protein sequence ID" value="ABQ28449.1"/>
    <property type="molecule type" value="Genomic_DNA"/>
</dbReference>
<dbReference type="RefSeq" id="WP_011941079.1">
    <property type="nucleotide sequence ID" value="NC_009483.1"/>
</dbReference>
<dbReference type="SMR" id="A5G9I1"/>
<dbReference type="STRING" id="351605.Gura_4306"/>
<dbReference type="KEGG" id="gur:Gura_4306"/>
<dbReference type="HOGENOM" id="CLU_132825_2_0_7"/>
<dbReference type="OrthoDB" id="9806791at2"/>
<dbReference type="Proteomes" id="UP000006695">
    <property type="component" value="Chromosome"/>
</dbReference>
<dbReference type="GO" id="GO:0005737">
    <property type="term" value="C:cytoplasm"/>
    <property type="evidence" value="ECO:0007669"/>
    <property type="project" value="UniProtKB-SubCell"/>
</dbReference>
<dbReference type="GO" id="GO:0005524">
    <property type="term" value="F:ATP binding"/>
    <property type="evidence" value="ECO:0007669"/>
    <property type="project" value="InterPro"/>
</dbReference>
<dbReference type="GO" id="GO:0046872">
    <property type="term" value="F:metal ion binding"/>
    <property type="evidence" value="ECO:0007669"/>
    <property type="project" value="TreeGrafter"/>
</dbReference>
<dbReference type="GO" id="GO:0044183">
    <property type="term" value="F:protein folding chaperone"/>
    <property type="evidence" value="ECO:0007669"/>
    <property type="project" value="InterPro"/>
</dbReference>
<dbReference type="GO" id="GO:0051087">
    <property type="term" value="F:protein-folding chaperone binding"/>
    <property type="evidence" value="ECO:0007669"/>
    <property type="project" value="TreeGrafter"/>
</dbReference>
<dbReference type="GO" id="GO:0051082">
    <property type="term" value="F:unfolded protein binding"/>
    <property type="evidence" value="ECO:0007669"/>
    <property type="project" value="TreeGrafter"/>
</dbReference>
<dbReference type="GO" id="GO:0051085">
    <property type="term" value="P:chaperone cofactor-dependent protein refolding"/>
    <property type="evidence" value="ECO:0007669"/>
    <property type="project" value="TreeGrafter"/>
</dbReference>
<dbReference type="CDD" id="cd00320">
    <property type="entry name" value="cpn10"/>
    <property type="match status" value="1"/>
</dbReference>
<dbReference type="FunFam" id="2.30.33.40:FF:000001">
    <property type="entry name" value="10 kDa chaperonin"/>
    <property type="match status" value="1"/>
</dbReference>
<dbReference type="Gene3D" id="2.30.33.40">
    <property type="entry name" value="GroES chaperonin"/>
    <property type="match status" value="1"/>
</dbReference>
<dbReference type="HAMAP" id="MF_00580">
    <property type="entry name" value="CH10"/>
    <property type="match status" value="1"/>
</dbReference>
<dbReference type="InterPro" id="IPR020818">
    <property type="entry name" value="Chaperonin_GroES"/>
</dbReference>
<dbReference type="InterPro" id="IPR037124">
    <property type="entry name" value="Chaperonin_GroES_sf"/>
</dbReference>
<dbReference type="InterPro" id="IPR011032">
    <property type="entry name" value="GroES-like_sf"/>
</dbReference>
<dbReference type="NCBIfam" id="NF001527">
    <property type="entry name" value="PRK00364.1-2"/>
    <property type="match status" value="1"/>
</dbReference>
<dbReference type="NCBIfam" id="NF001529">
    <property type="entry name" value="PRK00364.1-5"/>
    <property type="match status" value="1"/>
</dbReference>
<dbReference type="NCBIfam" id="NF001531">
    <property type="entry name" value="PRK00364.2-2"/>
    <property type="match status" value="1"/>
</dbReference>
<dbReference type="NCBIfam" id="NF001533">
    <property type="entry name" value="PRK00364.2-4"/>
    <property type="match status" value="1"/>
</dbReference>
<dbReference type="NCBIfam" id="NF001534">
    <property type="entry name" value="PRK00364.2-5"/>
    <property type="match status" value="1"/>
</dbReference>
<dbReference type="PANTHER" id="PTHR10772">
    <property type="entry name" value="10 KDA HEAT SHOCK PROTEIN"/>
    <property type="match status" value="1"/>
</dbReference>
<dbReference type="PANTHER" id="PTHR10772:SF58">
    <property type="entry name" value="CO-CHAPERONIN GROES"/>
    <property type="match status" value="1"/>
</dbReference>
<dbReference type="Pfam" id="PF00166">
    <property type="entry name" value="Cpn10"/>
    <property type="match status" value="1"/>
</dbReference>
<dbReference type="PRINTS" id="PR00297">
    <property type="entry name" value="CHAPERONIN10"/>
</dbReference>
<dbReference type="SMART" id="SM00883">
    <property type="entry name" value="Cpn10"/>
    <property type="match status" value="1"/>
</dbReference>
<dbReference type="SUPFAM" id="SSF50129">
    <property type="entry name" value="GroES-like"/>
    <property type="match status" value="1"/>
</dbReference>
<evidence type="ECO:0000255" key="1">
    <source>
        <dbReference type="HAMAP-Rule" id="MF_00580"/>
    </source>
</evidence>
<proteinExistence type="inferred from homology"/>